<name>TRUA_SALPC</name>
<reference key="1">
    <citation type="journal article" date="2009" name="PLoS ONE">
        <title>Salmonella paratyphi C: genetic divergence from Salmonella choleraesuis and pathogenic convergence with Salmonella typhi.</title>
        <authorList>
            <person name="Liu W.-Q."/>
            <person name="Feng Y."/>
            <person name="Wang Y."/>
            <person name="Zou Q.-H."/>
            <person name="Chen F."/>
            <person name="Guo J.-T."/>
            <person name="Peng Y.-H."/>
            <person name="Jin Y."/>
            <person name="Li Y.-G."/>
            <person name="Hu S.-N."/>
            <person name="Johnston R.N."/>
            <person name="Liu G.-R."/>
            <person name="Liu S.-L."/>
        </authorList>
    </citation>
    <scope>NUCLEOTIDE SEQUENCE [LARGE SCALE GENOMIC DNA]</scope>
    <source>
        <strain>RKS4594</strain>
    </source>
</reference>
<organism>
    <name type="scientific">Salmonella paratyphi C (strain RKS4594)</name>
    <dbReference type="NCBI Taxonomy" id="476213"/>
    <lineage>
        <taxon>Bacteria</taxon>
        <taxon>Pseudomonadati</taxon>
        <taxon>Pseudomonadota</taxon>
        <taxon>Gammaproteobacteria</taxon>
        <taxon>Enterobacterales</taxon>
        <taxon>Enterobacteriaceae</taxon>
        <taxon>Salmonella</taxon>
    </lineage>
</organism>
<proteinExistence type="inferred from homology"/>
<evidence type="ECO:0000255" key="1">
    <source>
        <dbReference type="HAMAP-Rule" id="MF_00171"/>
    </source>
</evidence>
<comment type="function">
    <text evidence="1">Formation of pseudouridine at positions 38, 39 and 40 in the anticodon stem and loop of transfer RNAs.</text>
</comment>
<comment type="catalytic activity">
    <reaction evidence="1">
        <text>uridine(38/39/40) in tRNA = pseudouridine(38/39/40) in tRNA</text>
        <dbReference type="Rhea" id="RHEA:22376"/>
        <dbReference type="Rhea" id="RHEA-COMP:10085"/>
        <dbReference type="Rhea" id="RHEA-COMP:10087"/>
        <dbReference type="ChEBI" id="CHEBI:65314"/>
        <dbReference type="ChEBI" id="CHEBI:65315"/>
        <dbReference type="EC" id="5.4.99.12"/>
    </reaction>
</comment>
<comment type="subunit">
    <text evidence="1">Homodimer.</text>
</comment>
<comment type="similarity">
    <text evidence="1">Belongs to the tRNA pseudouridine synthase TruA family.</text>
</comment>
<dbReference type="EC" id="5.4.99.12" evidence="1"/>
<dbReference type="EMBL" id="CP000857">
    <property type="protein sequence ID" value="ACN45499.1"/>
    <property type="molecule type" value="Genomic_DNA"/>
</dbReference>
<dbReference type="RefSeq" id="WP_000016631.1">
    <property type="nucleotide sequence ID" value="NC_012125.1"/>
</dbReference>
<dbReference type="SMR" id="C0PZZ5"/>
<dbReference type="KEGG" id="sei:SPC_1337"/>
<dbReference type="HOGENOM" id="CLU_014673_0_2_6"/>
<dbReference type="Proteomes" id="UP000001599">
    <property type="component" value="Chromosome"/>
</dbReference>
<dbReference type="GO" id="GO:0003723">
    <property type="term" value="F:RNA binding"/>
    <property type="evidence" value="ECO:0007669"/>
    <property type="project" value="InterPro"/>
</dbReference>
<dbReference type="GO" id="GO:0160147">
    <property type="term" value="F:tRNA pseudouridine(38-40) synthase activity"/>
    <property type="evidence" value="ECO:0007669"/>
    <property type="project" value="UniProtKB-EC"/>
</dbReference>
<dbReference type="GO" id="GO:0031119">
    <property type="term" value="P:tRNA pseudouridine synthesis"/>
    <property type="evidence" value="ECO:0007669"/>
    <property type="project" value="UniProtKB-UniRule"/>
</dbReference>
<dbReference type="CDD" id="cd02570">
    <property type="entry name" value="PseudoU_synth_EcTruA"/>
    <property type="match status" value="1"/>
</dbReference>
<dbReference type="FunFam" id="3.30.70.580:FF:000001">
    <property type="entry name" value="tRNA pseudouridine synthase A"/>
    <property type="match status" value="1"/>
</dbReference>
<dbReference type="FunFam" id="3.30.70.660:FF:000001">
    <property type="entry name" value="tRNA pseudouridine synthase A"/>
    <property type="match status" value="1"/>
</dbReference>
<dbReference type="Gene3D" id="3.30.70.660">
    <property type="entry name" value="Pseudouridine synthase I, catalytic domain, C-terminal subdomain"/>
    <property type="match status" value="1"/>
</dbReference>
<dbReference type="Gene3D" id="3.30.70.580">
    <property type="entry name" value="Pseudouridine synthase I, catalytic domain, N-terminal subdomain"/>
    <property type="match status" value="1"/>
</dbReference>
<dbReference type="HAMAP" id="MF_00171">
    <property type="entry name" value="TruA"/>
    <property type="match status" value="1"/>
</dbReference>
<dbReference type="InterPro" id="IPR020103">
    <property type="entry name" value="PsdUridine_synth_cat_dom_sf"/>
</dbReference>
<dbReference type="InterPro" id="IPR001406">
    <property type="entry name" value="PsdUridine_synth_TruA"/>
</dbReference>
<dbReference type="InterPro" id="IPR020097">
    <property type="entry name" value="PsdUridine_synth_TruA_a/b_dom"/>
</dbReference>
<dbReference type="InterPro" id="IPR020095">
    <property type="entry name" value="PsdUridine_synth_TruA_C"/>
</dbReference>
<dbReference type="InterPro" id="IPR020094">
    <property type="entry name" value="TruA/RsuA/RluB/E/F_N"/>
</dbReference>
<dbReference type="NCBIfam" id="TIGR00071">
    <property type="entry name" value="hisT_truA"/>
    <property type="match status" value="1"/>
</dbReference>
<dbReference type="PANTHER" id="PTHR11142">
    <property type="entry name" value="PSEUDOURIDYLATE SYNTHASE"/>
    <property type="match status" value="1"/>
</dbReference>
<dbReference type="PANTHER" id="PTHR11142:SF0">
    <property type="entry name" value="TRNA PSEUDOURIDINE SYNTHASE-LIKE 1"/>
    <property type="match status" value="1"/>
</dbReference>
<dbReference type="Pfam" id="PF01416">
    <property type="entry name" value="PseudoU_synth_1"/>
    <property type="match status" value="2"/>
</dbReference>
<dbReference type="PIRSF" id="PIRSF001430">
    <property type="entry name" value="tRNA_psdUrid_synth"/>
    <property type="match status" value="1"/>
</dbReference>
<dbReference type="SUPFAM" id="SSF55120">
    <property type="entry name" value="Pseudouridine synthase"/>
    <property type="match status" value="1"/>
</dbReference>
<sequence>MSGQQSSPVYKIALGIEYDGSKYYGWQRQNEVRSVQEKLEKALSQVANEPINVFCAGRTDAGVHGTGQVVHFETTALRKDAAWTLGVNANLPGDIAVRWVKTVPDDFHARFSATARRYRYIIYNHRLRPAVLAKGVTHYYEPLDAERMHRAAQCLLGENDFTSFRAVQCQSRTPWRNVMHINVTRHGPYVVVDIKANAFVHHMVRNIVGSLLEVGAHNQPESWIAELLAARDRTLAAATAKAEGLYLVAVDYPDRFDLPKPPMGPLFLAD</sequence>
<gene>
    <name evidence="1" type="primary">truA</name>
    <name type="ordered locus">SPC_1337</name>
</gene>
<keyword id="KW-0413">Isomerase</keyword>
<keyword id="KW-0819">tRNA processing</keyword>
<feature type="chain" id="PRO_1000123764" description="tRNA pseudouridine synthase A">
    <location>
        <begin position="1"/>
        <end position="270"/>
    </location>
</feature>
<feature type="active site" description="Nucleophile" evidence="1">
    <location>
        <position position="60"/>
    </location>
</feature>
<feature type="binding site" evidence="1">
    <location>
        <position position="118"/>
    </location>
    <ligand>
        <name>substrate</name>
    </ligand>
</feature>
<protein>
    <recommendedName>
        <fullName evidence="1">tRNA pseudouridine synthase A</fullName>
        <ecNumber evidence="1">5.4.99.12</ecNumber>
    </recommendedName>
    <alternativeName>
        <fullName evidence="1">tRNA pseudouridine(38-40) synthase</fullName>
    </alternativeName>
    <alternativeName>
        <fullName evidence="1">tRNA pseudouridylate synthase I</fullName>
    </alternativeName>
    <alternativeName>
        <fullName evidence="1">tRNA-uridine isomerase I</fullName>
    </alternativeName>
</protein>
<accession>C0PZZ5</accession>